<keyword id="KW-1185">Reference proteome</keyword>
<keyword id="KW-0687">Ribonucleoprotein</keyword>
<keyword id="KW-0689">Ribosomal protein</keyword>
<comment type="similarity">
    <text evidence="1">Belongs to the bacterial ribosomal protein bL33 family.</text>
</comment>
<organism>
    <name type="scientific">Syntrophobacter fumaroxidans (strain DSM 10017 / MPOB)</name>
    <dbReference type="NCBI Taxonomy" id="335543"/>
    <lineage>
        <taxon>Bacteria</taxon>
        <taxon>Pseudomonadati</taxon>
        <taxon>Thermodesulfobacteriota</taxon>
        <taxon>Syntrophobacteria</taxon>
        <taxon>Syntrophobacterales</taxon>
        <taxon>Syntrophobacteraceae</taxon>
        <taxon>Syntrophobacter</taxon>
    </lineage>
</organism>
<evidence type="ECO:0000255" key="1">
    <source>
        <dbReference type="HAMAP-Rule" id="MF_00294"/>
    </source>
</evidence>
<evidence type="ECO:0000305" key="2"/>
<name>RL33_SYNFM</name>
<feature type="chain" id="PRO_0000356760" description="Large ribosomal subunit protein bL33">
    <location>
        <begin position="1"/>
        <end position="49"/>
    </location>
</feature>
<proteinExistence type="inferred from homology"/>
<accession>A0LIH7</accession>
<sequence length="49" mass="5907">MRTLVTLACSECKRRNYTTTKNKRTTPEKLSFKKYCRFCHAHTEHKETK</sequence>
<protein>
    <recommendedName>
        <fullName evidence="1">Large ribosomal subunit protein bL33</fullName>
    </recommendedName>
    <alternativeName>
        <fullName evidence="2">50S ribosomal protein L33</fullName>
    </alternativeName>
</protein>
<gene>
    <name evidence="1" type="primary">rpmG</name>
    <name type="ordered locus">Sfum_1542</name>
</gene>
<dbReference type="EMBL" id="CP000478">
    <property type="protein sequence ID" value="ABK17229.1"/>
    <property type="molecule type" value="Genomic_DNA"/>
</dbReference>
<dbReference type="RefSeq" id="WP_011698400.1">
    <property type="nucleotide sequence ID" value="NC_008554.1"/>
</dbReference>
<dbReference type="SMR" id="A0LIH7"/>
<dbReference type="FunCoup" id="A0LIH7">
    <property type="interactions" value="495"/>
</dbReference>
<dbReference type="STRING" id="335543.Sfum_1542"/>
<dbReference type="KEGG" id="sfu:Sfum_1542"/>
<dbReference type="eggNOG" id="COG0267">
    <property type="taxonomic scope" value="Bacteria"/>
</dbReference>
<dbReference type="HOGENOM" id="CLU_190949_0_2_7"/>
<dbReference type="InParanoid" id="A0LIH7"/>
<dbReference type="Proteomes" id="UP000001784">
    <property type="component" value="Chromosome"/>
</dbReference>
<dbReference type="GO" id="GO:0005737">
    <property type="term" value="C:cytoplasm"/>
    <property type="evidence" value="ECO:0007669"/>
    <property type="project" value="UniProtKB-ARBA"/>
</dbReference>
<dbReference type="GO" id="GO:1990904">
    <property type="term" value="C:ribonucleoprotein complex"/>
    <property type="evidence" value="ECO:0007669"/>
    <property type="project" value="UniProtKB-KW"/>
</dbReference>
<dbReference type="GO" id="GO:0005840">
    <property type="term" value="C:ribosome"/>
    <property type="evidence" value="ECO:0007669"/>
    <property type="project" value="UniProtKB-KW"/>
</dbReference>
<dbReference type="GO" id="GO:0003735">
    <property type="term" value="F:structural constituent of ribosome"/>
    <property type="evidence" value="ECO:0007669"/>
    <property type="project" value="InterPro"/>
</dbReference>
<dbReference type="GO" id="GO:0006412">
    <property type="term" value="P:translation"/>
    <property type="evidence" value="ECO:0007669"/>
    <property type="project" value="UniProtKB-UniRule"/>
</dbReference>
<dbReference type="Gene3D" id="2.20.28.120">
    <property type="entry name" value="Ribosomal protein L33"/>
    <property type="match status" value="1"/>
</dbReference>
<dbReference type="HAMAP" id="MF_00294">
    <property type="entry name" value="Ribosomal_bL33"/>
    <property type="match status" value="1"/>
</dbReference>
<dbReference type="InterPro" id="IPR001705">
    <property type="entry name" value="Ribosomal_bL33"/>
</dbReference>
<dbReference type="InterPro" id="IPR018264">
    <property type="entry name" value="Ribosomal_bL33_CS"/>
</dbReference>
<dbReference type="InterPro" id="IPR038584">
    <property type="entry name" value="Ribosomal_bL33_sf"/>
</dbReference>
<dbReference type="InterPro" id="IPR011332">
    <property type="entry name" value="Ribosomal_zn-bd"/>
</dbReference>
<dbReference type="NCBIfam" id="NF001764">
    <property type="entry name" value="PRK00504.1"/>
    <property type="match status" value="1"/>
</dbReference>
<dbReference type="NCBIfam" id="NF001860">
    <property type="entry name" value="PRK00595.1"/>
    <property type="match status" value="1"/>
</dbReference>
<dbReference type="NCBIfam" id="TIGR01023">
    <property type="entry name" value="rpmG_bact"/>
    <property type="match status" value="1"/>
</dbReference>
<dbReference type="PANTHER" id="PTHR43168">
    <property type="entry name" value="50S RIBOSOMAL PROTEIN L33, CHLOROPLASTIC"/>
    <property type="match status" value="1"/>
</dbReference>
<dbReference type="PANTHER" id="PTHR43168:SF2">
    <property type="entry name" value="LARGE RIBOSOMAL SUBUNIT PROTEIN BL33C"/>
    <property type="match status" value="1"/>
</dbReference>
<dbReference type="Pfam" id="PF00471">
    <property type="entry name" value="Ribosomal_L33"/>
    <property type="match status" value="1"/>
</dbReference>
<dbReference type="SUPFAM" id="SSF57829">
    <property type="entry name" value="Zn-binding ribosomal proteins"/>
    <property type="match status" value="1"/>
</dbReference>
<dbReference type="PROSITE" id="PS00582">
    <property type="entry name" value="RIBOSOMAL_L33"/>
    <property type="match status" value="1"/>
</dbReference>
<reference key="1">
    <citation type="submission" date="2006-10" db="EMBL/GenBank/DDBJ databases">
        <title>Complete sequence of Syntrophobacter fumaroxidans MPOB.</title>
        <authorList>
            <consortium name="US DOE Joint Genome Institute"/>
            <person name="Copeland A."/>
            <person name="Lucas S."/>
            <person name="Lapidus A."/>
            <person name="Barry K."/>
            <person name="Detter J.C."/>
            <person name="Glavina del Rio T."/>
            <person name="Hammon N."/>
            <person name="Israni S."/>
            <person name="Pitluck S."/>
            <person name="Goltsman E.G."/>
            <person name="Martinez M."/>
            <person name="Schmutz J."/>
            <person name="Larimer F."/>
            <person name="Land M."/>
            <person name="Hauser L."/>
            <person name="Kyrpides N."/>
            <person name="Kim E."/>
            <person name="Boone D.R."/>
            <person name="Brockman F."/>
            <person name="Culley D."/>
            <person name="Ferry J."/>
            <person name="Gunsalus R."/>
            <person name="McInerney M.J."/>
            <person name="Morrison M."/>
            <person name="Plugge C."/>
            <person name="Rohlin L."/>
            <person name="Scholten J."/>
            <person name="Sieber J."/>
            <person name="Stams A.J.M."/>
            <person name="Worm P."/>
            <person name="Henstra A.M."/>
            <person name="Richardson P."/>
        </authorList>
    </citation>
    <scope>NUCLEOTIDE SEQUENCE [LARGE SCALE GENOMIC DNA]</scope>
    <source>
        <strain>DSM 10017 / MPOB</strain>
    </source>
</reference>